<keyword id="KW-0678">Repressor</keyword>
<keyword id="KW-0687">Ribonucleoprotein</keyword>
<keyword id="KW-0689">Ribosomal protein</keyword>
<keyword id="KW-0694">RNA-binding</keyword>
<keyword id="KW-0699">rRNA-binding</keyword>
<keyword id="KW-0810">Translation regulation</keyword>
<keyword id="KW-0820">tRNA-binding</keyword>
<reference key="1">
    <citation type="journal article" date="2005" name="Jpn. Agric. Res. Q.">
        <title>Genome sequence of Xanthomonas oryzae pv. oryzae suggests contribution of large numbers of effector genes and insertion sequences to its race diversity.</title>
        <authorList>
            <person name="Ochiai H."/>
            <person name="Inoue Y."/>
            <person name="Takeya M."/>
            <person name="Sasaki A."/>
            <person name="Kaku H."/>
        </authorList>
    </citation>
    <scope>NUCLEOTIDE SEQUENCE [LARGE SCALE GENOMIC DNA]</scope>
    <source>
        <strain>MAFF 311018</strain>
    </source>
</reference>
<comment type="function">
    <text evidence="1">Binds directly to 23S rRNA. The L1 stalk is quite mobile in the ribosome, and is involved in E site tRNA release.</text>
</comment>
<comment type="function">
    <text evidence="1">Protein L1 is also a translational repressor protein, it controls the translation of the L11 operon by binding to its mRNA.</text>
</comment>
<comment type="subunit">
    <text evidence="1">Part of the 50S ribosomal subunit.</text>
</comment>
<comment type="similarity">
    <text evidence="1">Belongs to the universal ribosomal protein uL1 family.</text>
</comment>
<proteinExistence type="inferred from homology"/>
<accession>Q2NZX5</accession>
<organism>
    <name type="scientific">Xanthomonas oryzae pv. oryzae (strain MAFF 311018)</name>
    <dbReference type="NCBI Taxonomy" id="342109"/>
    <lineage>
        <taxon>Bacteria</taxon>
        <taxon>Pseudomonadati</taxon>
        <taxon>Pseudomonadota</taxon>
        <taxon>Gammaproteobacteria</taxon>
        <taxon>Lysobacterales</taxon>
        <taxon>Lysobacteraceae</taxon>
        <taxon>Xanthomonas</taxon>
    </lineage>
</organism>
<name>RL1_XANOM</name>
<gene>
    <name evidence="1" type="primary">rplA</name>
    <name type="ordered locus">XOO3397</name>
</gene>
<feature type="chain" id="PRO_0000308138" description="Large ribosomal subunit protein uL1">
    <location>
        <begin position="1"/>
        <end position="232"/>
    </location>
</feature>
<sequence length="232" mass="23852">MAQSKRVKAIAAAVAPGKAYAFEDAIKILKTATKAKFVESIDVAVRLGVDAKKSDQQVRGSTVLPAGTGKSVRVAVFAPAGAKADEALAAGAEAVGMDDLAEKMQAGDLSYDVVIATPDAMRVVGKLGTLLGPRGLMPNPKVGTVSANPGEAVKNAKSGQVRYRTDKAGIIHCTIGKASFDDEALKSNLQALLLDLVKAKPATSKGTYLQKVSVSSTMGPGVTVDQSSLSLK</sequence>
<protein>
    <recommendedName>
        <fullName evidence="1">Large ribosomal subunit protein uL1</fullName>
    </recommendedName>
    <alternativeName>
        <fullName evidence="2">50S ribosomal protein L1</fullName>
    </alternativeName>
</protein>
<evidence type="ECO:0000255" key="1">
    <source>
        <dbReference type="HAMAP-Rule" id="MF_01318"/>
    </source>
</evidence>
<evidence type="ECO:0000305" key="2"/>
<dbReference type="EMBL" id="AP008229">
    <property type="protein sequence ID" value="BAE70152.1"/>
    <property type="molecule type" value="Genomic_DNA"/>
</dbReference>
<dbReference type="RefSeq" id="WP_011409258.1">
    <property type="nucleotide sequence ID" value="NC_007705.1"/>
</dbReference>
<dbReference type="SMR" id="Q2NZX5"/>
<dbReference type="KEGG" id="xom:XOO3397"/>
<dbReference type="HOGENOM" id="CLU_062853_0_0_6"/>
<dbReference type="GO" id="GO:0022625">
    <property type="term" value="C:cytosolic large ribosomal subunit"/>
    <property type="evidence" value="ECO:0007669"/>
    <property type="project" value="TreeGrafter"/>
</dbReference>
<dbReference type="GO" id="GO:0019843">
    <property type="term" value="F:rRNA binding"/>
    <property type="evidence" value="ECO:0007669"/>
    <property type="project" value="UniProtKB-UniRule"/>
</dbReference>
<dbReference type="GO" id="GO:0003735">
    <property type="term" value="F:structural constituent of ribosome"/>
    <property type="evidence" value="ECO:0007669"/>
    <property type="project" value="InterPro"/>
</dbReference>
<dbReference type="GO" id="GO:0000049">
    <property type="term" value="F:tRNA binding"/>
    <property type="evidence" value="ECO:0007669"/>
    <property type="project" value="UniProtKB-KW"/>
</dbReference>
<dbReference type="GO" id="GO:0006417">
    <property type="term" value="P:regulation of translation"/>
    <property type="evidence" value="ECO:0007669"/>
    <property type="project" value="UniProtKB-KW"/>
</dbReference>
<dbReference type="GO" id="GO:0006412">
    <property type="term" value="P:translation"/>
    <property type="evidence" value="ECO:0007669"/>
    <property type="project" value="UniProtKB-UniRule"/>
</dbReference>
<dbReference type="CDD" id="cd00403">
    <property type="entry name" value="Ribosomal_L1"/>
    <property type="match status" value="1"/>
</dbReference>
<dbReference type="FunFam" id="3.40.50.790:FF:000001">
    <property type="entry name" value="50S ribosomal protein L1"/>
    <property type="match status" value="1"/>
</dbReference>
<dbReference type="Gene3D" id="3.30.190.20">
    <property type="match status" value="1"/>
</dbReference>
<dbReference type="Gene3D" id="3.40.50.790">
    <property type="match status" value="1"/>
</dbReference>
<dbReference type="HAMAP" id="MF_01318_B">
    <property type="entry name" value="Ribosomal_uL1_B"/>
    <property type="match status" value="1"/>
</dbReference>
<dbReference type="InterPro" id="IPR005878">
    <property type="entry name" value="Ribosom_uL1_bac-type"/>
</dbReference>
<dbReference type="InterPro" id="IPR002143">
    <property type="entry name" value="Ribosomal_uL1"/>
</dbReference>
<dbReference type="InterPro" id="IPR023674">
    <property type="entry name" value="Ribosomal_uL1-like"/>
</dbReference>
<dbReference type="InterPro" id="IPR028364">
    <property type="entry name" value="Ribosomal_uL1/biogenesis"/>
</dbReference>
<dbReference type="InterPro" id="IPR016095">
    <property type="entry name" value="Ribosomal_uL1_3-a/b-sand"/>
</dbReference>
<dbReference type="InterPro" id="IPR023673">
    <property type="entry name" value="Ribosomal_uL1_CS"/>
</dbReference>
<dbReference type="NCBIfam" id="TIGR01169">
    <property type="entry name" value="rplA_bact"/>
    <property type="match status" value="1"/>
</dbReference>
<dbReference type="PANTHER" id="PTHR36427">
    <property type="entry name" value="54S RIBOSOMAL PROTEIN L1, MITOCHONDRIAL"/>
    <property type="match status" value="1"/>
</dbReference>
<dbReference type="PANTHER" id="PTHR36427:SF3">
    <property type="entry name" value="LARGE RIBOSOMAL SUBUNIT PROTEIN UL1M"/>
    <property type="match status" value="1"/>
</dbReference>
<dbReference type="Pfam" id="PF00687">
    <property type="entry name" value="Ribosomal_L1"/>
    <property type="match status" value="1"/>
</dbReference>
<dbReference type="PIRSF" id="PIRSF002155">
    <property type="entry name" value="Ribosomal_L1"/>
    <property type="match status" value="1"/>
</dbReference>
<dbReference type="SUPFAM" id="SSF56808">
    <property type="entry name" value="Ribosomal protein L1"/>
    <property type="match status" value="1"/>
</dbReference>
<dbReference type="PROSITE" id="PS01199">
    <property type="entry name" value="RIBOSOMAL_L1"/>
    <property type="match status" value="1"/>
</dbReference>